<name>ILF3A_XENLA</name>
<organism>
    <name type="scientific">Xenopus laevis</name>
    <name type="common">African clawed frog</name>
    <dbReference type="NCBI Taxonomy" id="8355"/>
    <lineage>
        <taxon>Eukaryota</taxon>
        <taxon>Metazoa</taxon>
        <taxon>Chordata</taxon>
        <taxon>Craniata</taxon>
        <taxon>Vertebrata</taxon>
        <taxon>Euteleostomi</taxon>
        <taxon>Amphibia</taxon>
        <taxon>Batrachia</taxon>
        <taxon>Anura</taxon>
        <taxon>Pipoidea</taxon>
        <taxon>Pipidae</taxon>
        <taxon>Xenopodinae</taxon>
        <taxon>Xenopus</taxon>
        <taxon>Xenopus</taxon>
    </lineage>
</organism>
<sequence length="897" mass="98121">MRPMRIFLNDDRHVMAKHSVVYPTQEELEAVQNMVSHTERALKAVSDWIDQQEKDCSGEQEQPMAEETETTEEGKDSEMKTGENPTRTLRGVMRVGLVAKGLLLKGDLDLELVLLCRDKPTISLLKRVADNLVLQFETVSEDKYEVIQNIREALIVVKSTKEPPLTLNIRLTSPLVREEMEKLSAGETLTVSDPPDVLDRHKCLAALASLRHAKWFQARANGLKSCVIVIRVLRDLCTRVPTWEPLRGWPLELLCEKAIGTANRPMGAGEALRRVLECLSSGILMPDGSGLYDPCEKDASDALEHLERQQREDITQSAQHALRLAAFGQLHKVLGMDPLPSKMPKKTKVETPVIDYTVQIPPSTTYAMPPLKRPIEEDGDDKSPSKKKKKIQKKDEKSEPPQVMNALMRLNQLKPGLQYKLISQTGPVHAPVFTMSVEVDDKTFEASGPSKKTAKLHVAVKVLQDMGLPTGMEEKEEGTDESEQKPVVQTPAQPDDSAEVDSAALDQAESAKQQGPILTKHGKNPVMELNEKRRGLKYELISETGGSHDKRFVMEVEVDGVKFQGSGSNKKVAKAYAALSALEKLFPDYTMYTEAPKKKRPPMMPRGGPKFAGKHNQGFGMMYSEVPPPQAMRGRGRGGMNRGRGRGRGGFGGGYMNSGGYGGGYGGNYNYQTSATAGYSQFYSNGGASGNAGGGGAGTGGYSSYYQGDSYSAPTPPKPFVNKKPPPPQQQQQQQPPPQHASNPPKPSYNQGYQGHQGGQQQQQQQQQQQTYNQNQYSNYGPPQKQKGGYNQGAQGAGSGGSYNYSNSYTGGTAPLGTAVERVQEGEAAALTQRQALVTTQAHTPAMVEPAVLRRTKVTRSLITIKVPPDRTTVALQIITSSLREELGVTAGIQNTT</sequence>
<feature type="chain" id="PRO_0000391689" description="Interleukin enhancer-binding factor 3-A">
    <location>
        <begin position="1"/>
        <end position="897"/>
    </location>
</feature>
<feature type="domain" description="DZF" evidence="4">
    <location>
        <begin position="5"/>
        <end position="379"/>
    </location>
</feature>
<feature type="domain" description="DRBM 1" evidence="3">
    <location>
        <begin position="399"/>
        <end position="468"/>
    </location>
</feature>
<feature type="domain" description="DRBM 2" evidence="3">
    <location>
        <begin position="521"/>
        <end position="587"/>
    </location>
</feature>
<feature type="region of interest" description="Disordered" evidence="5">
    <location>
        <begin position="52"/>
        <end position="85"/>
    </location>
</feature>
<feature type="region of interest" description="Disordered" evidence="5">
    <location>
        <begin position="364"/>
        <end position="403"/>
    </location>
</feature>
<feature type="region of interest" description="Disordered" evidence="5">
    <location>
        <begin position="466"/>
        <end position="502"/>
    </location>
</feature>
<feature type="region of interest" description="Disordered" evidence="5">
    <location>
        <begin position="627"/>
        <end position="650"/>
    </location>
</feature>
<feature type="region of interest" description="Disordered" evidence="5">
    <location>
        <begin position="708"/>
        <end position="797"/>
    </location>
</feature>
<feature type="short sequence motif" description="Bipartite nuclear localization signal" evidence="2">
    <location>
        <begin position="372"/>
        <end position="390"/>
    </location>
</feature>
<feature type="compositionally biased region" description="Basic and acidic residues" evidence="5">
    <location>
        <begin position="72"/>
        <end position="81"/>
    </location>
</feature>
<feature type="compositionally biased region" description="Basic and acidic residues" evidence="5">
    <location>
        <begin position="373"/>
        <end position="384"/>
    </location>
</feature>
<feature type="compositionally biased region" description="Gly residues" evidence="5">
    <location>
        <begin position="637"/>
        <end position="650"/>
    </location>
</feature>
<feature type="compositionally biased region" description="Pro residues" evidence="5">
    <location>
        <begin position="714"/>
        <end position="747"/>
    </location>
</feature>
<feature type="compositionally biased region" description="Low complexity" evidence="5">
    <location>
        <begin position="749"/>
        <end position="794"/>
    </location>
</feature>
<feature type="splice variant" id="VSP_053194" description="In isoform 2." evidence="15">
    <original>QFYSNGGASGNAGGG</original>
    <variation>DFFTDCYGYHDFASA</variation>
    <location>
        <begin position="681"/>
        <end position="695"/>
    </location>
</feature>
<feature type="splice variant" id="VSP_053195" description="In isoform 2." evidence="15">
    <location>
        <begin position="696"/>
        <end position="897"/>
    </location>
</feature>
<feature type="mutagenesis site" description="Abolishes mRNA-binding and cytoplasmic retention, localizing predominantly to the nucleus from early development. Also disrupts DNA-binding; when associated with A-552." evidence="6 7">
    <original>F</original>
    <variation>A</variation>
    <location>
        <position position="433"/>
    </location>
</feature>
<feature type="mutagenesis site" description="Abolishes mRNA-binding and cytoplasmic retention, localizing predominantly to the nucleus from early development. Also disrupts DNA-binding; when associated with A-433." evidence="6 7">
    <original>F</original>
    <variation>A</variation>
    <location>
        <position position="552"/>
    </location>
</feature>
<feature type="sequence conflict" description="In Ref. 2; AAG22859." evidence="18" ref="2">
    <original>V</original>
    <variation>I</variation>
    <location>
        <position position="157"/>
    </location>
</feature>
<feature type="sequence conflict" description="In Ref. 1; AAA19960." evidence="18" ref="1">
    <original>L</original>
    <variation>M</variation>
    <location>
        <position position="540"/>
    </location>
</feature>
<proteinExistence type="evidence at protein level"/>
<gene>
    <name type="primary">ilf3-a</name>
    <name type="synonym">ilf3</name>
    <name evidence="16" type="synonym">ubp3</name>
</gene>
<dbReference type="EMBL" id="U07155">
    <property type="protein sequence ID" value="AAA19960.1"/>
    <property type="molecule type" value="mRNA"/>
</dbReference>
<dbReference type="EMBL" id="AY008299">
    <property type="protein sequence ID" value="AAG22859.1"/>
    <property type="status" value="ALT_FRAME"/>
    <property type="molecule type" value="mRNA"/>
</dbReference>
<dbReference type="PIR" id="I51652">
    <property type="entry name" value="I51652"/>
</dbReference>
<dbReference type="RefSeq" id="XP_018094990.1">
    <property type="nucleotide sequence ID" value="XM_018239501.1"/>
</dbReference>
<dbReference type="RefSeq" id="XP_018094991.1">
    <molecule id="Q91550-2"/>
    <property type="nucleotide sequence ID" value="XM_018239502.1"/>
</dbReference>
<dbReference type="SMR" id="Q91550"/>
<dbReference type="IntAct" id="Q91550">
    <property type="interactions" value="1"/>
</dbReference>
<dbReference type="DNASU" id="399197"/>
<dbReference type="GeneID" id="399197"/>
<dbReference type="AGR" id="Xenbase:XB-GENE-494371"/>
<dbReference type="CTD" id="399197"/>
<dbReference type="Xenbase" id="XB-GENE-494371">
    <property type="gene designation" value="ilf3.S"/>
</dbReference>
<dbReference type="OrthoDB" id="8898434at2759"/>
<dbReference type="Proteomes" id="UP000186698">
    <property type="component" value="Chromosome 3S"/>
</dbReference>
<dbReference type="Bgee" id="399197">
    <property type="expression patterns" value="Expressed in egg cell and 19 other cell types or tissues"/>
</dbReference>
<dbReference type="GO" id="GO:0005737">
    <property type="term" value="C:cytoplasm"/>
    <property type="evidence" value="ECO:0000314"/>
    <property type="project" value="UniProtKB"/>
</dbReference>
<dbReference type="GO" id="GO:0005634">
    <property type="term" value="C:nucleus"/>
    <property type="evidence" value="ECO:0000314"/>
    <property type="project" value="UniProtKB"/>
</dbReference>
<dbReference type="GO" id="GO:0071011">
    <property type="term" value="C:precatalytic spliceosome"/>
    <property type="evidence" value="ECO:0007669"/>
    <property type="project" value="TreeGrafter"/>
</dbReference>
<dbReference type="GO" id="GO:1990904">
    <property type="term" value="C:ribonucleoprotein complex"/>
    <property type="evidence" value="ECO:0000314"/>
    <property type="project" value="UniProtKB"/>
</dbReference>
<dbReference type="GO" id="GO:0003725">
    <property type="term" value="F:double-stranded RNA binding"/>
    <property type="evidence" value="ECO:0000314"/>
    <property type="project" value="UniProtKB"/>
</dbReference>
<dbReference type="GO" id="GO:0035925">
    <property type="term" value="F:mRNA 3'-UTR AU-rich region binding"/>
    <property type="evidence" value="ECO:0000250"/>
    <property type="project" value="UniProtKB"/>
</dbReference>
<dbReference type="GO" id="GO:0048027">
    <property type="term" value="F:mRNA 5'-UTR binding"/>
    <property type="evidence" value="ECO:0000314"/>
    <property type="project" value="UniProtKB"/>
</dbReference>
<dbReference type="GO" id="GO:0043565">
    <property type="term" value="F:sequence-specific DNA binding"/>
    <property type="evidence" value="ECO:0000314"/>
    <property type="project" value="UniProtKB"/>
</dbReference>
<dbReference type="GO" id="GO:0003727">
    <property type="term" value="F:single-stranded RNA binding"/>
    <property type="evidence" value="ECO:0000318"/>
    <property type="project" value="GO_Central"/>
</dbReference>
<dbReference type="GO" id="GO:0000976">
    <property type="term" value="F:transcription cis-regulatory region binding"/>
    <property type="evidence" value="ECO:0000314"/>
    <property type="project" value="UniProtKB"/>
</dbReference>
<dbReference type="GO" id="GO:0051607">
    <property type="term" value="P:defense response to virus"/>
    <property type="evidence" value="ECO:0007669"/>
    <property type="project" value="UniProtKB-KW"/>
</dbReference>
<dbReference type="GO" id="GO:0006355">
    <property type="term" value="P:regulation of DNA-templated transcription"/>
    <property type="evidence" value="ECO:0000315"/>
    <property type="project" value="UniProtKB"/>
</dbReference>
<dbReference type="GO" id="GO:0006357">
    <property type="term" value="P:regulation of transcription by RNA polymerase II"/>
    <property type="evidence" value="ECO:0000314"/>
    <property type="project" value="UniProtKB"/>
</dbReference>
<dbReference type="GO" id="GO:0160091">
    <property type="term" value="P:spliceosome-depend formation of circular RNA"/>
    <property type="evidence" value="ECO:0000250"/>
    <property type="project" value="UniProtKB"/>
</dbReference>
<dbReference type="CDD" id="cd19910">
    <property type="entry name" value="DSRM_ILF3_rpt1"/>
    <property type="match status" value="1"/>
</dbReference>
<dbReference type="CDD" id="cd19912">
    <property type="entry name" value="DSRM_ILF3_rpt2"/>
    <property type="match status" value="1"/>
</dbReference>
<dbReference type="FunFam" id="1.10.1410.40:FF:000001">
    <property type="entry name" value="interleukin enhancer-binding factor 3 isoform X1"/>
    <property type="match status" value="1"/>
</dbReference>
<dbReference type="FunFam" id="3.30.160.20:FF:000006">
    <property type="entry name" value="interleukin enhancer-binding factor 3 isoform X2"/>
    <property type="match status" value="1"/>
</dbReference>
<dbReference type="FunFam" id="3.30.160.20:FF:000008">
    <property type="entry name" value="interleukin enhancer-binding factor 3 isoform X2"/>
    <property type="match status" value="1"/>
</dbReference>
<dbReference type="Gene3D" id="1.10.1410.40">
    <property type="match status" value="1"/>
</dbReference>
<dbReference type="Gene3D" id="3.30.160.20">
    <property type="match status" value="2"/>
</dbReference>
<dbReference type="Gene3D" id="3.30.460.10">
    <property type="entry name" value="Beta Polymerase, domain 2"/>
    <property type="match status" value="2"/>
</dbReference>
<dbReference type="InterPro" id="IPR014720">
    <property type="entry name" value="dsRBD_dom"/>
</dbReference>
<dbReference type="InterPro" id="IPR033099">
    <property type="entry name" value="DSRM1_ILF3"/>
</dbReference>
<dbReference type="InterPro" id="IPR006561">
    <property type="entry name" value="DZF_dom"/>
</dbReference>
<dbReference type="InterPro" id="IPR049402">
    <property type="entry name" value="DZF_dom_C"/>
</dbReference>
<dbReference type="InterPro" id="IPR049401">
    <property type="entry name" value="DZF_dom_N"/>
</dbReference>
<dbReference type="InterPro" id="IPR043519">
    <property type="entry name" value="NT_sf"/>
</dbReference>
<dbReference type="PANTHER" id="PTHR45762:SF4">
    <property type="entry name" value="INTERLEUKIN ENHANCER-BINDING FACTOR 3"/>
    <property type="match status" value="1"/>
</dbReference>
<dbReference type="PANTHER" id="PTHR45762">
    <property type="entry name" value="ZINC FINGER RNA-BINDING PROTEIN"/>
    <property type="match status" value="1"/>
</dbReference>
<dbReference type="Pfam" id="PF00035">
    <property type="entry name" value="dsrm"/>
    <property type="match status" value="2"/>
</dbReference>
<dbReference type="Pfam" id="PF20965">
    <property type="entry name" value="DZF_C"/>
    <property type="match status" value="1"/>
</dbReference>
<dbReference type="Pfam" id="PF07528">
    <property type="entry name" value="DZF_N"/>
    <property type="match status" value="1"/>
</dbReference>
<dbReference type="SMART" id="SM00358">
    <property type="entry name" value="DSRM"/>
    <property type="match status" value="2"/>
</dbReference>
<dbReference type="SMART" id="SM00572">
    <property type="entry name" value="DZF"/>
    <property type="match status" value="1"/>
</dbReference>
<dbReference type="SUPFAM" id="SSF54768">
    <property type="entry name" value="dsRNA-binding domain-like"/>
    <property type="match status" value="2"/>
</dbReference>
<dbReference type="PROSITE" id="PS50137">
    <property type="entry name" value="DS_RBD"/>
    <property type="match status" value="2"/>
</dbReference>
<dbReference type="PROSITE" id="PS51703">
    <property type="entry name" value="DZF"/>
    <property type="match status" value="1"/>
</dbReference>
<evidence type="ECO:0000250" key="1">
    <source>
        <dbReference type="UniProtKB" id="Q12906"/>
    </source>
</evidence>
<evidence type="ECO:0000255" key="2"/>
<evidence type="ECO:0000255" key="3">
    <source>
        <dbReference type="PROSITE-ProRule" id="PRU00266"/>
    </source>
</evidence>
<evidence type="ECO:0000255" key="4">
    <source>
        <dbReference type="PROSITE-ProRule" id="PRU01040"/>
    </source>
</evidence>
<evidence type="ECO:0000256" key="5">
    <source>
        <dbReference type="SAM" id="MobiDB-lite"/>
    </source>
</evidence>
<evidence type="ECO:0000269" key="6">
    <source>
    </source>
</evidence>
<evidence type="ECO:0000269" key="7">
    <source>
    </source>
</evidence>
<evidence type="ECO:0000269" key="8">
    <source>
    </source>
</evidence>
<evidence type="ECO:0000269" key="9">
    <source>
    </source>
</evidence>
<evidence type="ECO:0000269" key="10">
    <source>
    </source>
</evidence>
<evidence type="ECO:0000269" key="11">
    <source>
    </source>
</evidence>
<evidence type="ECO:0000269" key="12">
    <source>
    </source>
</evidence>
<evidence type="ECO:0000269" key="13">
    <source ref="5"/>
</evidence>
<evidence type="ECO:0000269" key="14">
    <source ref="7"/>
</evidence>
<evidence type="ECO:0000303" key="15">
    <source>
    </source>
</evidence>
<evidence type="ECO:0000303" key="16">
    <source>
    </source>
</evidence>
<evidence type="ECO:0000303" key="17">
    <source>
    </source>
</evidence>
<evidence type="ECO:0000305" key="18"/>
<evidence type="ECO:0000312" key="19">
    <source>
        <dbReference type="EMBL" id="AAA19960.1"/>
    </source>
</evidence>
<evidence type="ECO:0000312" key="20">
    <source>
        <dbReference type="EMBL" id="AAG22859.1"/>
    </source>
</evidence>
<accession>Q91550</accession>
<accession>Q9DEU4</accession>
<reference evidence="18 19" key="1">
    <citation type="journal article" date="1994" name="Curr. Biol.">
        <title>Binding properties of newly identified Xenopus proteins containing dsRNA-binding motifs.</title>
        <authorList>
            <person name="Bass B.L."/>
            <person name="Hurst S.R."/>
            <person name="Singer J.D."/>
        </authorList>
    </citation>
    <scope>NUCLEOTIDE SEQUENCE [MRNA] (ISOFORM 2)</scope>
    <scope>RNA-BINDING</scope>
    <scope>DEVELOPMENTAL STAGE</scope>
    <source>
        <tissue evidence="19">Ovary</tissue>
    </source>
</reference>
<reference evidence="18 20" key="2">
    <citation type="journal article" date="2000" name="EMBO J.">
        <title>RNA-dependent cytoplasmic anchoring of a transcription factor subunit during Xenopus development.</title>
        <authorList>
            <person name="Brzostowski J."/>
            <person name="Robinson C."/>
            <person name="Orford R."/>
            <person name="Elgar S."/>
            <person name="Scarlett G."/>
            <person name="Peterkin T."/>
            <person name="Malartre M."/>
            <person name="Kneale G."/>
            <person name="Wormington M."/>
            <person name="Guille M."/>
        </authorList>
    </citation>
    <scope>NUCLEOTIDE SEQUENCE [MRNA] (ISOFORM 1)</scope>
    <scope>FUNCTION</scope>
    <scope>RNA-BINDING</scope>
    <scope>SUBCELLULAR LOCATION</scope>
    <scope>IDENTIFICATION IN A RIBONUCLEOPROTEIN COMPLEX WITH YBX2</scope>
    <scope>DEVELOPMENTAL STAGE</scope>
    <scope>MUTAGENESIS OF PHE-433 AND PHE-552</scope>
</reference>
<reference evidence="18" key="3">
    <citation type="journal article" date="1996" name="EMBO J.">
        <title>Overexpression of poly(A) binding protein prevents maturation-specific deadenylation and translational inactivation in Xenopus oocytes.</title>
        <authorList>
            <person name="Wormington M."/>
            <person name="Searfoss A.M."/>
            <person name="Hurney C.A."/>
        </authorList>
    </citation>
    <scope>IDENTIFICATION OF THE MRNA IN A RIBONUCLEOPROTEIN COMPLEX</scope>
</reference>
<reference evidence="18" key="4">
    <citation type="journal article" date="1998" name="Mol. Cell. Biol.">
        <title>The maternal CCAAT box transcription factor which controls GATA-2 expression is novel and developmentally regulated and contains a double-stranded-RNA-binding subunit.</title>
        <authorList>
            <person name="Orford R.L."/>
            <person name="Robinson C."/>
            <person name="Haydon J.M."/>
            <person name="Patient R.K."/>
            <person name="Guille M.J."/>
        </authorList>
    </citation>
    <scope>FUNCTION</scope>
    <scope>IDENTIFICATION IN THE CBTF COMPLEX</scope>
    <scope>SUBCELLULAR LOCATION</scope>
    <scope>TISSUE SPECIFICITY</scope>
</reference>
<reference evidence="18" key="5">
    <citation type="thesis" date="2001" institute="University of Portsmouth" country="United Kingdom">
        <authorList>
            <person name="Elgar S.J."/>
        </authorList>
    </citation>
    <scope>PHOSPHORYLATION</scope>
</reference>
<reference evidence="18" key="6">
    <citation type="journal article" date="2004" name="J. Biol. Chem.">
        <title>Intact RNA-binding domains are necessary for structure-specific DNA binding and transcription control by CBTF122 during Xenopus development.</title>
        <authorList>
            <person name="Scarlett G.P."/>
            <person name="Elgar S.J."/>
            <person name="Cary P.D."/>
            <person name="Noble A.M."/>
            <person name="Orford R.L."/>
            <person name="Kneale G.G."/>
            <person name="Guille M.J."/>
        </authorList>
    </citation>
    <scope>FUNCTION</scope>
    <scope>RNA-BINDING</scope>
    <scope>DNA-BINDING</scope>
    <scope>MUTAGENESIS OF PHE-433 AND PHE-552</scope>
</reference>
<reference evidence="18" key="7">
    <citation type="thesis" date="2006" institute="University of Portsmouth" country="United Kingdom">
        <authorList>
            <person name="Cazanove O.M.P."/>
        </authorList>
    </citation>
    <scope>PHOSPHORYLATION</scope>
</reference>
<reference evidence="18" key="8">
    <citation type="journal article" date="2008" name="Biochemistry">
        <title>Methylation of Xilf3 by Xprmt1b alters its DNA, but not RNA, binding activity.</title>
        <authorList>
            <person name="Cazanove O."/>
            <person name="Batut J."/>
            <person name="Scarlett G."/>
            <person name="Mumford K."/>
            <person name="Elgar S."/>
            <person name="Thresh S."/>
            <person name="Neant I."/>
            <person name="Moreau M."/>
            <person name="Guille M."/>
        </authorList>
    </citation>
    <scope>FUNCTION</scope>
    <scope>DNA-BINDING</scope>
    <scope>METHYLATION</scope>
</reference>
<reference evidence="18" key="9">
    <citation type="journal article" date="2009" name="Biochim. Biophys. Acta">
        <title>A-form DNA structure is a determinant of transcript levels from the Xenopus gata2 promoter in embryos.</title>
        <authorList>
            <person name="Llewellyn K.J."/>
            <person name="Cary P.D."/>
            <person name="McClellan J.A."/>
            <person name="Guille M.J."/>
            <person name="Scarlett G.P."/>
        </authorList>
    </citation>
    <scope>FUNCTION</scope>
</reference>
<comment type="function">
    <text evidence="1 6 7 8 9 10 12">RNA-binding protein that plays an essential role in the biogenesis of circular RNAs (circRNAs) which are produced by back-splicing circularization of pre-mRNAs. Within the nucleus, promotes circRNAs processing by stabilizing the regulatory elements residing in the flanking introns of the circularized exons (By similarity). Plays thereby a role in the back-splicing of a subset of circRNAs (By similarity). As a consequence, participates in a wide range of transcriptional and post-transcriptional processes (By similarity). Binds to poly-U elements and AU-rich elements (AREs) in the 3'-UTR of target mRNAs (By similarity). Upon viral infection, ILF3 accumulates in the cytoplasm and participates in the innate antiviral response (By similarity). Mechanistically, ILF3 becomes phosphorylated and activated by the double-stranded RNA-activated protein kinase/PKR which releases ILF3 from cellular mature circRNAs. In turn, unbound ILF3 molecules are able to interact with and thus inhibit viral mRNAs (By similarity). Has a cytoplasmic role early in development as part of a ribonucleoprotein (mRNP) complex which may regulate mRNA transport and/or translation. Following nuclear localization at the mid-blastula transition, acts as a transcription factor and binds the 5'-CCAAT-3' promoter sequence to regulate transcription of the gata2 gene as a subunit of the CCAAT box transcription factor (CBTF). Its role as an mRNP component negatively regulates its activity as a transcription factor by precluding its nuclear localization (PubMed:10899122, PubMed:15452137, PubMed:18636753, PubMed:19665599, PubMed:7922339, PubMed:9710639).</text>
</comment>
<comment type="subunit">
    <text evidence="6 11 12">A component of a ybx2/frgy2-containing mRNA-ribonucleoprotein (mRNP) complex. Also a component of the CCAAT box transcription factor (CBTF) complex.</text>
</comment>
<comment type="subcellular location">
    <subcellularLocation>
        <location evidence="6 12">Nucleus</location>
    </subcellularLocation>
    <subcellularLocation>
        <location evidence="6 12">Cytoplasm</location>
    </subcellularLocation>
    <text evidence="6 12">Cytoplasmic in fertilized eggs, then translocates to the nucleus prior to gastrulation. RNA-binding is required for cytoplasmic retention during early development, and nuclear translocation at the mid-blastula transition (MBT) is probably coupled to the degradation of maternal mRNA that occurs at that stage.</text>
</comment>
<comment type="alternative products">
    <event type="alternative splicing"/>
    <isoform>
        <id>Q91550-1</id>
        <name evidence="6">1</name>
        <name evidence="6">CBTF122</name>
        <name evidence="12">p122</name>
        <sequence type="displayed"/>
    </isoform>
    <isoform>
        <id>Q91550-2</id>
        <name evidence="10">2</name>
        <name evidence="6">CBTF98</name>
        <sequence type="described" ref="VSP_053194 VSP_053195"/>
    </isoform>
</comment>
<comment type="tissue specificity">
    <text evidence="12">Expressed mainly in the ectoderm (at protein level).</text>
</comment>
<comment type="developmental stage">
    <text evidence="6 10">Expressed both maternally and zygotically throughout early development (at protein level). Isoform 1 accumulates throughout oogenesis but isoform 2 is translationally masked until oocyte maturation.</text>
</comment>
<comment type="PTM">
    <text evidence="13 14">Phosphorylated. Phosphorylation affects nuclear translocation.</text>
</comment>
<comment type="PTM">
    <text evidence="8">Methylated by protein arginine N-methyltransferase 1 (prmt1b) in the RGG-rich domain. Methylation decreases DNA-binding and thereby decreases transcription of the gata2 gene, but does not regulate dsRNA binding or subcellular localization.</text>
</comment>
<comment type="sequence caution" evidence="18">
    <conflict type="frameshift">
        <sequence resource="EMBL-CDS" id="AAG22859"/>
    </conflict>
</comment>
<keyword id="KW-0025">Alternative splicing</keyword>
<keyword id="KW-0051">Antiviral defense</keyword>
<keyword id="KW-0963">Cytoplasm</keyword>
<keyword id="KW-0217">Developmental protein</keyword>
<keyword id="KW-0238">DNA-binding</keyword>
<keyword id="KW-0488">Methylation</keyword>
<keyword id="KW-0539">Nucleus</keyword>
<keyword id="KW-0597">Phosphoprotein</keyword>
<keyword id="KW-1185">Reference proteome</keyword>
<keyword id="KW-0677">Repeat</keyword>
<keyword id="KW-0694">RNA-binding</keyword>
<keyword id="KW-0804">Transcription</keyword>
<keyword id="KW-0805">Transcription regulation</keyword>
<protein>
    <recommendedName>
        <fullName>Interleukin enhancer-binding factor 3-A</fullName>
    </recommendedName>
    <alternativeName>
        <fullName evidence="17">CCAAT box transcription factor subunit</fullName>
    </alternativeName>
    <alternativeName>
        <fullName evidence="15">Double-stranded RNA-binding protein 4F.1</fullName>
        <shortName evidence="19">DsRNA-binding protein 4F.1</shortName>
    </alternativeName>
</protein>